<reference key="1">
    <citation type="journal article" date="1993" name="Mol. Cell. Endocrinol.">
        <title>A diazepam binding inhibitor (DBI) homolog from the tobacco hornworm, Manduca sexta.</title>
        <authorList>
            <person name="Snyder M.J."/>
            <person name="Feyereisen R."/>
        </authorList>
    </citation>
    <scope>NUCLEOTIDE SEQUENCE [MRNA]</scope>
    <source>
        <tissue>Midgut</tissue>
    </source>
</reference>
<feature type="chain" id="PRO_0000214011" description="Acyl-CoA-binding protein homolog">
    <location>
        <begin position="1"/>
        <end position="90"/>
    </location>
</feature>
<feature type="domain" description="ACB" evidence="2">
    <location>
        <begin position="3"/>
        <end position="89"/>
    </location>
</feature>
<feature type="binding site" evidence="1">
    <location>
        <position position="15"/>
    </location>
    <ligand>
        <name>an acyl-CoA</name>
        <dbReference type="ChEBI" id="CHEBI:58342"/>
    </ligand>
</feature>
<feature type="binding site" evidence="1">
    <location>
        <begin position="30"/>
        <end position="34"/>
    </location>
    <ligand>
        <name>an acyl-CoA</name>
        <dbReference type="ChEBI" id="CHEBI:58342"/>
    </ligand>
</feature>
<feature type="binding site" evidence="1">
    <location>
        <position position="53"/>
    </location>
    <ligand>
        <name>an acyl-CoA</name>
        <dbReference type="ChEBI" id="CHEBI:58342"/>
    </ligand>
</feature>
<feature type="binding site" evidence="1">
    <location>
        <position position="57"/>
    </location>
    <ligand>
        <name>an acyl-CoA</name>
        <dbReference type="ChEBI" id="CHEBI:58342"/>
    </ligand>
</feature>
<feature type="binding site" evidence="1">
    <location>
        <position position="76"/>
    </location>
    <ligand>
        <name>an acyl-CoA</name>
        <dbReference type="ChEBI" id="CHEBI:58342"/>
    </ligand>
</feature>
<dbReference type="EMBL" id="L11449">
    <property type="protein sequence ID" value="AAA29309.1"/>
    <property type="molecule type" value="mRNA"/>
</dbReference>
<dbReference type="EMBL" id="S65642">
    <property type="protein sequence ID" value="AAB28237.2"/>
    <property type="molecule type" value="mRNA"/>
</dbReference>
<dbReference type="SMR" id="P31824"/>
<dbReference type="OrthoDB" id="346910at2759"/>
<dbReference type="GO" id="GO:0000062">
    <property type="term" value="F:fatty-acyl-CoA binding"/>
    <property type="evidence" value="ECO:0007669"/>
    <property type="project" value="InterPro"/>
</dbReference>
<dbReference type="GO" id="GO:0006631">
    <property type="term" value="P:fatty acid metabolic process"/>
    <property type="evidence" value="ECO:0007669"/>
    <property type="project" value="TreeGrafter"/>
</dbReference>
<dbReference type="Gene3D" id="1.20.80.10">
    <property type="match status" value="1"/>
</dbReference>
<dbReference type="InterPro" id="IPR022408">
    <property type="entry name" value="Acyl-CoA-binding_prot_CS"/>
</dbReference>
<dbReference type="InterPro" id="IPR000582">
    <property type="entry name" value="Acyl-CoA-binding_protein"/>
</dbReference>
<dbReference type="InterPro" id="IPR035984">
    <property type="entry name" value="Acyl-CoA-binding_sf"/>
</dbReference>
<dbReference type="InterPro" id="IPR014352">
    <property type="entry name" value="FERM/acyl-CoA-bd_prot_sf"/>
</dbReference>
<dbReference type="PANTHER" id="PTHR23310:SF62">
    <property type="entry name" value="ACYL-COA BINDING PROTEIN 1, ISOFORM A"/>
    <property type="match status" value="1"/>
</dbReference>
<dbReference type="PANTHER" id="PTHR23310">
    <property type="entry name" value="ACYL-COA-BINDING PROTEIN, ACBP"/>
    <property type="match status" value="1"/>
</dbReference>
<dbReference type="Pfam" id="PF00887">
    <property type="entry name" value="ACBP"/>
    <property type="match status" value="1"/>
</dbReference>
<dbReference type="PRINTS" id="PR00689">
    <property type="entry name" value="ACOABINDINGP"/>
</dbReference>
<dbReference type="SUPFAM" id="SSF47027">
    <property type="entry name" value="Acyl-CoA binding protein"/>
    <property type="match status" value="1"/>
</dbReference>
<dbReference type="PROSITE" id="PS00880">
    <property type="entry name" value="ACB_1"/>
    <property type="match status" value="1"/>
</dbReference>
<dbReference type="PROSITE" id="PS51228">
    <property type="entry name" value="ACB_2"/>
    <property type="match status" value="1"/>
</dbReference>
<name>ACBP_MANSE</name>
<sequence length="90" mass="9774">MSLQEQFDQAASNVRNLKSLPSDNDLLELYALFKQASAGDADPANRPGLLDLKGKAKFDAWHKKAGLSKEDAQKAYIAKVESLIASLGLQ</sequence>
<evidence type="ECO:0000250" key="1"/>
<evidence type="ECO:0000255" key="2">
    <source>
        <dbReference type="PROSITE-ProRule" id="PRU00573"/>
    </source>
</evidence>
<evidence type="ECO:0000305" key="3"/>
<accession>P31824</accession>
<proteinExistence type="inferred from homology"/>
<comment type="function">
    <text>Binds medium- and long-chain acyl-CoA esters with very high affinity and may function as an intracellular carrier of acyl-CoA esters.</text>
</comment>
<comment type="similarity">
    <text evidence="3">Belongs to the ACBP family.</text>
</comment>
<protein>
    <recommendedName>
        <fullName>Acyl-CoA-binding protein homolog</fullName>
        <shortName>ACBP</shortName>
    </recommendedName>
    <alternativeName>
        <fullName>Diazepam-binding inhibitor homolog</fullName>
        <shortName>DBI</shortName>
    </alternativeName>
</protein>
<organism>
    <name type="scientific">Manduca sexta</name>
    <name type="common">Tobacco hawkmoth</name>
    <name type="synonym">Tobacco hornworm</name>
    <dbReference type="NCBI Taxonomy" id="7130"/>
    <lineage>
        <taxon>Eukaryota</taxon>
        <taxon>Metazoa</taxon>
        <taxon>Ecdysozoa</taxon>
        <taxon>Arthropoda</taxon>
        <taxon>Hexapoda</taxon>
        <taxon>Insecta</taxon>
        <taxon>Pterygota</taxon>
        <taxon>Neoptera</taxon>
        <taxon>Endopterygota</taxon>
        <taxon>Lepidoptera</taxon>
        <taxon>Glossata</taxon>
        <taxon>Ditrysia</taxon>
        <taxon>Bombycoidea</taxon>
        <taxon>Sphingidae</taxon>
        <taxon>Sphinginae</taxon>
        <taxon>Sphingini</taxon>
        <taxon>Manduca</taxon>
    </lineage>
</organism>
<keyword id="KW-0446">Lipid-binding</keyword>
<keyword id="KW-0813">Transport</keyword>